<evidence type="ECO:0000255" key="1">
    <source>
        <dbReference type="HAMAP-Rule" id="MF_00093"/>
    </source>
</evidence>
<evidence type="ECO:0000256" key="2">
    <source>
        <dbReference type="SAM" id="MobiDB-lite"/>
    </source>
</evidence>
<proteinExistence type="inferred from homology"/>
<gene>
    <name evidence="1" type="primary">prfA</name>
    <name type="ordered locus">BARBAKC583_0359</name>
</gene>
<protein>
    <recommendedName>
        <fullName evidence="1">Peptide chain release factor 1</fullName>
        <shortName evidence="1">RF-1</shortName>
    </recommendedName>
</protein>
<feature type="chain" id="PRO_1000004860" description="Peptide chain release factor 1">
    <location>
        <begin position="1"/>
        <end position="359"/>
    </location>
</feature>
<feature type="region of interest" description="Disordered" evidence="2">
    <location>
        <begin position="283"/>
        <end position="305"/>
    </location>
</feature>
<feature type="modified residue" description="N5-methylglutamine" evidence="1">
    <location>
        <position position="235"/>
    </location>
</feature>
<name>RF1_BARBK</name>
<organism>
    <name type="scientific">Bartonella bacilliformis (strain ATCC 35685 / KC583 / Herrer 020/F12,63)</name>
    <dbReference type="NCBI Taxonomy" id="360095"/>
    <lineage>
        <taxon>Bacteria</taxon>
        <taxon>Pseudomonadati</taxon>
        <taxon>Pseudomonadota</taxon>
        <taxon>Alphaproteobacteria</taxon>
        <taxon>Hyphomicrobiales</taxon>
        <taxon>Bartonellaceae</taxon>
        <taxon>Bartonella</taxon>
    </lineage>
</organism>
<dbReference type="EMBL" id="CP000524">
    <property type="protein sequence ID" value="ABM44805.1"/>
    <property type="molecule type" value="Genomic_DNA"/>
</dbReference>
<dbReference type="RefSeq" id="WP_005766317.1">
    <property type="nucleotide sequence ID" value="NC_008783.1"/>
</dbReference>
<dbReference type="SMR" id="A1URS5"/>
<dbReference type="STRING" id="360095.BARBAKC583_0359"/>
<dbReference type="GeneID" id="4684483"/>
<dbReference type="KEGG" id="bbk:BARBAKC583_0359"/>
<dbReference type="PATRIC" id="fig|360095.6.peg.342"/>
<dbReference type="eggNOG" id="COG0216">
    <property type="taxonomic scope" value="Bacteria"/>
</dbReference>
<dbReference type="HOGENOM" id="CLU_036856_0_1_5"/>
<dbReference type="OrthoDB" id="9806673at2"/>
<dbReference type="Proteomes" id="UP000000643">
    <property type="component" value="Chromosome"/>
</dbReference>
<dbReference type="GO" id="GO:0005737">
    <property type="term" value="C:cytoplasm"/>
    <property type="evidence" value="ECO:0007669"/>
    <property type="project" value="UniProtKB-SubCell"/>
</dbReference>
<dbReference type="GO" id="GO:0016149">
    <property type="term" value="F:translation release factor activity, codon specific"/>
    <property type="evidence" value="ECO:0007669"/>
    <property type="project" value="UniProtKB-UniRule"/>
</dbReference>
<dbReference type="FunFam" id="3.30.160.20:FF:000004">
    <property type="entry name" value="Peptide chain release factor 1"/>
    <property type="match status" value="1"/>
</dbReference>
<dbReference type="FunFam" id="3.30.70.1660:FF:000002">
    <property type="entry name" value="Peptide chain release factor 1"/>
    <property type="match status" value="1"/>
</dbReference>
<dbReference type="FunFam" id="3.30.70.1660:FF:000004">
    <property type="entry name" value="Peptide chain release factor 1"/>
    <property type="match status" value="1"/>
</dbReference>
<dbReference type="Gene3D" id="3.30.160.20">
    <property type="match status" value="1"/>
</dbReference>
<dbReference type="Gene3D" id="3.30.70.1660">
    <property type="match status" value="2"/>
</dbReference>
<dbReference type="Gene3D" id="6.10.140.1950">
    <property type="match status" value="1"/>
</dbReference>
<dbReference type="HAMAP" id="MF_00093">
    <property type="entry name" value="Rel_fac_1"/>
    <property type="match status" value="1"/>
</dbReference>
<dbReference type="InterPro" id="IPR005139">
    <property type="entry name" value="PCRF"/>
</dbReference>
<dbReference type="InterPro" id="IPR000352">
    <property type="entry name" value="Pep_chain_release_fac_I"/>
</dbReference>
<dbReference type="InterPro" id="IPR045853">
    <property type="entry name" value="Pep_chain_release_fac_I_sf"/>
</dbReference>
<dbReference type="InterPro" id="IPR050057">
    <property type="entry name" value="Prokaryotic/Mito_RF"/>
</dbReference>
<dbReference type="InterPro" id="IPR004373">
    <property type="entry name" value="RF-1"/>
</dbReference>
<dbReference type="NCBIfam" id="TIGR00019">
    <property type="entry name" value="prfA"/>
    <property type="match status" value="1"/>
</dbReference>
<dbReference type="NCBIfam" id="NF001859">
    <property type="entry name" value="PRK00591.1"/>
    <property type="match status" value="1"/>
</dbReference>
<dbReference type="PANTHER" id="PTHR43804">
    <property type="entry name" value="LD18447P"/>
    <property type="match status" value="1"/>
</dbReference>
<dbReference type="PANTHER" id="PTHR43804:SF7">
    <property type="entry name" value="LD18447P"/>
    <property type="match status" value="1"/>
</dbReference>
<dbReference type="Pfam" id="PF03462">
    <property type="entry name" value="PCRF"/>
    <property type="match status" value="1"/>
</dbReference>
<dbReference type="Pfam" id="PF00472">
    <property type="entry name" value="RF-1"/>
    <property type="match status" value="1"/>
</dbReference>
<dbReference type="SMART" id="SM00937">
    <property type="entry name" value="PCRF"/>
    <property type="match status" value="1"/>
</dbReference>
<dbReference type="SUPFAM" id="SSF75620">
    <property type="entry name" value="Release factor"/>
    <property type="match status" value="1"/>
</dbReference>
<dbReference type="PROSITE" id="PS00745">
    <property type="entry name" value="RF_PROK_I"/>
    <property type="match status" value="1"/>
</dbReference>
<sequence length="359" mass="40401">MVSLSQDRMKQIEKRFEIIESQMAQNPNAETYVKLASEYAELQQIVTPIRTLNALYKEVTELEAMANTTQIDADMYALAQEELVLLRQKIEQLEQEIQILLLPKDIADEKSAIIEIRAGTGGSEAALFAGDLFRMYERYANAHKWKVEVVSLSDSEVGGYKEIIATISGKGVFSKLKFESGVHRVQRVPETETSGRIHTSAATVAVLPEAEEIDIEIRPEDIRIDTMRASGAGGQHVNTTDSAVRITHIPTGIMVVQAEKSQHQNRARALQILRSRLFDIERQKAESERSASRKTQVGSGDRSERIRTYNFPQGRVTDHRINLTLYKLDRIMEGDLDELINPLISNHQTALLTEINDNA</sequence>
<accession>A1URS5</accession>
<comment type="function">
    <text evidence="1">Peptide chain release factor 1 directs the termination of translation in response to the peptide chain termination codons UAG and UAA.</text>
</comment>
<comment type="subcellular location">
    <subcellularLocation>
        <location evidence="1">Cytoplasm</location>
    </subcellularLocation>
</comment>
<comment type="PTM">
    <text evidence="1">Methylated by PrmC. Methylation increases the termination efficiency of RF1.</text>
</comment>
<comment type="similarity">
    <text evidence="1">Belongs to the prokaryotic/mitochondrial release factor family.</text>
</comment>
<keyword id="KW-0963">Cytoplasm</keyword>
<keyword id="KW-0488">Methylation</keyword>
<keyword id="KW-0648">Protein biosynthesis</keyword>
<reference key="1">
    <citation type="submission" date="2006-12" db="EMBL/GenBank/DDBJ databases">
        <authorList>
            <person name="Hendrix L."/>
            <person name="Mohamoud Y."/>
            <person name="Radune D."/>
            <person name="Shvartsbeyn A."/>
            <person name="Daugherty S."/>
            <person name="Dodson R."/>
            <person name="Durkin A.S."/>
            <person name="Harkins D."/>
            <person name="Huot H."/>
            <person name="Kothari S.P."/>
            <person name="Madupu R."/>
            <person name="Li J."/>
            <person name="Nelson W.C."/>
            <person name="Shrivastava S."/>
            <person name="Giglio M.G."/>
            <person name="Haft D."/>
            <person name="Selengut J."/>
            <person name="Fraser-Ligget C."/>
            <person name="Seshadri R."/>
        </authorList>
    </citation>
    <scope>NUCLEOTIDE SEQUENCE [LARGE SCALE GENOMIC DNA]</scope>
    <source>
        <strain>ATCC 35685 / KC583 / Herrer 020/F12,63</strain>
    </source>
</reference>